<sequence>MSAQNSLFSGSIVALVTPMNHYGEVDFSCLEKLVEHHIEAGSNALVSVGTTGESATLSIEENVKVIEKTVEFAKGRIPIIAGAGANATSEAITMTKLLRDSGVAGCLSVVPYYNKPTQEGIYQHFKAIAECTNLPQILYNVPSRTGSDMKPETVARLAEIENIVGIKEATGDVSRIVKIKQLAGKNFIVLSGDDATGLEAIKLGAEGVISVTNNIAAKDMADMYRYALVGDFDKAEEINARLMRLHHDLFIESNPIPVKWAAYRLGLIKSSHLRLPLTTLSEEIQPKVEDALKIAGLL</sequence>
<accession>A5UG62</accession>
<reference key="1">
    <citation type="journal article" date="2007" name="Genome Biol.">
        <title>Characterization and modeling of the Haemophilus influenzae core and supragenomes based on the complete genomic sequences of Rd and 12 clinical nontypeable strains.</title>
        <authorList>
            <person name="Hogg J.S."/>
            <person name="Hu F.Z."/>
            <person name="Janto B."/>
            <person name="Boissy R."/>
            <person name="Hayes J."/>
            <person name="Keefe R."/>
            <person name="Post J.C."/>
            <person name="Ehrlich G.D."/>
        </authorList>
    </citation>
    <scope>NUCLEOTIDE SEQUENCE [LARGE SCALE GENOMIC DNA]</scope>
    <source>
        <strain>PittGG</strain>
    </source>
</reference>
<proteinExistence type="inferred from homology"/>
<feature type="chain" id="PRO_1000050194" description="4-hydroxy-tetrahydrodipicolinate synthase">
    <location>
        <begin position="1"/>
        <end position="298"/>
    </location>
</feature>
<feature type="active site" description="Proton donor/acceptor" evidence="1">
    <location>
        <position position="139"/>
    </location>
</feature>
<feature type="active site" description="Schiff-base intermediate with substrate" evidence="1">
    <location>
        <position position="167"/>
    </location>
</feature>
<feature type="binding site" evidence="1">
    <location>
        <position position="51"/>
    </location>
    <ligand>
        <name>pyruvate</name>
        <dbReference type="ChEBI" id="CHEBI:15361"/>
    </ligand>
</feature>
<feature type="binding site" evidence="1">
    <location>
        <position position="209"/>
    </location>
    <ligand>
        <name>pyruvate</name>
        <dbReference type="ChEBI" id="CHEBI:15361"/>
    </ligand>
</feature>
<feature type="site" description="Part of a proton relay during catalysis" evidence="1">
    <location>
        <position position="50"/>
    </location>
</feature>
<feature type="site" description="Part of a proton relay during catalysis" evidence="1">
    <location>
        <position position="113"/>
    </location>
</feature>
<gene>
    <name evidence="1" type="primary">dapA</name>
    <name type="ordered locus">CGSHiGG_03970</name>
</gene>
<evidence type="ECO:0000255" key="1">
    <source>
        <dbReference type="HAMAP-Rule" id="MF_00418"/>
    </source>
</evidence>
<evidence type="ECO:0000305" key="2"/>
<comment type="function">
    <text evidence="1">Catalyzes the condensation of (S)-aspartate-beta-semialdehyde [(S)-ASA] and pyruvate to 4-hydroxy-tetrahydrodipicolinate (HTPA).</text>
</comment>
<comment type="catalytic activity">
    <reaction evidence="1">
        <text>L-aspartate 4-semialdehyde + pyruvate = (2S,4S)-4-hydroxy-2,3,4,5-tetrahydrodipicolinate + H2O + H(+)</text>
        <dbReference type="Rhea" id="RHEA:34171"/>
        <dbReference type="ChEBI" id="CHEBI:15361"/>
        <dbReference type="ChEBI" id="CHEBI:15377"/>
        <dbReference type="ChEBI" id="CHEBI:15378"/>
        <dbReference type="ChEBI" id="CHEBI:67139"/>
        <dbReference type="ChEBI" id="CHEBI:537519"/>
        <dbReference type="EC" id="4.3.3.7"/>
    </reaction>
</comment>
<comment type="pathway">
    <text evidence="1">Amino-acid biosynthesis; L-lysine biosynthesis via DAP pathway; (S)-tetrahydrodipicolinate from L-aspartate: step 3/4.</text>
</comment>
<comment type="subunit">
    <text evidence="1">Homotetramer; dimer of dimers.</text>
</comment>
<comment type="subcellular location">
    <subcellularLocation>
        <location evidence="1">Cytoplasm</location>
    </subcellularLocation>
</comment>
<comment type="similarity">
    <text evidence="1">Belongs to the DapA family.</text>
</comment>
<comment type="caution">
    <text evidence="2">Was originally thought to be a dihydrodipicolinate synthase (DHDPS), catalyzing the condensation of (S)-aspartate-beta-semialdehyde [(S)-ASA] and pyruvate to dihydrodipicolinate (DHDP). However, it was shown in E.coli that the product of the enzymatic reaction is not dihydrodipicolinate but in fact (4S)-4-hydroxy-2,3,4,5-tetrahydro-(2S)-dipicolinic acid (HTPA), and that the consecutive dehydration reaction leading to DHDP is not spontaneous but catalyzed by DapB.</text>
</comment>
<protein>
    <recommendedName>
        <fullName evidence="1">4-hydroxy-tetrahydrodipicolinate synthase</fullName>
        <shortName evidence="1">HTPA synthase</shortName>
        <ecNumber evidence="1">4.3.3.7</ecNumber>
    </recommendedName>
</protein>
<dbReference type="EC" id="4.3.3.7" evidence="1"/>
<dbReference type="EMBL" id="CP000672">
    <property type="protein sequence ID" value="ABQ99767.1"/>
    <property type="molecule type" value="Genomic_DNA"/>
</dbReference>
<dbReference type="SMR" id="A5UG62"/>
<dbReference type="KEGG" id="hiq:CGSHiGG_03970"/>
<dbReference type="HOGENOM" id="CLU_049343_7_1_6"/>
<dbReference type="UniPathway" id="UPA00034">
    <property type="reaction ID" value="UER00017"/>
</dbReference>
<dbReference type="Proteomes" id="UP000001990">
    <property type="component" value="Chromosome"/>
</dbReference>
<dbReference type="GO" id="GO:0005829">
    <property type="term" value="C:cytosol"/>
    <property type="evidence" value="ECO:0007669"/>
    <property type="project" value="TreeGrafter"/>
</dbReference>
<dbReference type="GO" id="GO:0008840">
    <property type="term" value="F:4-hydroxy-tetrahydrodipicolinate synthase activity"/>
    <property type="evidence" value="ECO:0007669"/>
    <property type="project" value="UniProtKB-UniRule"/>
</dbReference>
<dbReference type="GO" id="GO:0019877">
    <property type="term" value="P:diaminopimelate biosynthetic process"/>
    <property type="evidence" value="ECO:0007669"/>
    <property type="project" value="UniProtKB-UniRule"/>
</dbReference>
<dbReference type="GO" id="GO:0009089">
    <property type="term" value="P:lysine biosynthetic process via diaminopimelate"/>
    <property type="evidence" value="ECO:0007669"/>
    <property type="project" value="UniProtKB-UniRule"/>
</dbReference>
<dbReference type="CDD" id="cd00950">
    <property type="entry name" value="DHDPS"/>
    <property type="match status" value="1"/>
</dbReference>
<dbReference type="Gene3D" id="3.20.20.70">
    <property type="entry name" value="Aldolase class I"/>
    <property type="match status" value="1"/>
</dbReference>
<dbReference type="HAMAP" id="MF_00418">
    <property type="entry name" value="DapA"/>
    <property type="match status" value="1"/>
</dbReference>
<dbReference type="InterPro" id="IPR013785">
    <property type="entry name" value="Aldolase_TIM"/>
</dbReference>
<dbReference type="InterPro" id="IPR005263">
    <property type="entry name" value="DapA"/>
</dbReference>
<dbReference type="InterPro" id="IPR002220">
    <property type="entry name" value="DapA-like"/>
</dbReference>
<dbReference type="InterPro" id="IPR020625">
    <property type="entry name" value="Schiff_base-form_aldolases_AS"/>
</dbReference>
<dbReference type="InterPro" id="IPR020624">
    <property type="entry name" value="Schiff_base-form_aldolases_CS"/>
</dbReference>
<dbReference type="NCBIfam" id="TIGR00674">
    <property type="entry name" value="dapA"/>
    <property type="match status" value="1"/>
</dbReference>
<dbReference type="PANTHER" id="PTHR12128:SF66">
    <property type="entry name" value="4-HYDROXY-2-OXOGLUTARATE ALDOLASE, MITOCHONDRIAL"/>
    <property type="match status" value="1"/>
</dbReference>
<dbReference type="PANTHER" id="PTHR12128">
    <property type="entry name" value="DIHYDRODIPICOLINATE SYNTHASE"/>
    <property type="match status" value="1"/>
</dbReference>
<dbReference type="Pfam" id="PF00701">
    <property type="entry name" value="DHDPS"/>
    <property type="match status" value="1"/>
</dbReference>
<dbReference type="PIRSF" id="PIRSF001365">
    <property type="entry name" value="DHDPS"/>
    <property type="match status" value="1"/>
</dbReference>
<dbReference type="PRINTS" id="PR00146">
    <property type="entry name" value="DHPICSNTHASE"/>
</dbReference>
<dbReference type="SMART" id="SM01130">
    <property type="entry name" value="DHDPS"/>
    <property type="match status" value="1"/>
</dbReference>
<dbReference type="SUPFAM" id="SSF51569">
    <property type="entry name" value="Aldolase"/>
    <property type="match status" value="1"/>
</dbReference>
<dbReference type="PROSITE" id="PS00665">
    <property type="entry name" value="DHDPS_1"/>
    <property type="match status" value="1"/>
</dbReference>
<dbReference type="PROSITE" id="PS00666">
    <property type="entry name" value="DHDPS_2"/>
    <property type="match status" value="1"/>
</dbReference>
<name>DAPA_HAEIG</name>
<organism>
    <name type="scientific">Haemophilus influenzae (strain PittGG)</name>
    <dbReference type="NCBI Taxonomy" id="374931"/>
    <lineage>
        <taxon>Bacteria</taxon>
        <taxon>Pseudomonadati</taxon>
        <taxon>Pseudomonadota</taxon>
        <taxon>Gammaproteobacteria</taxon>
        <taxon>Pasteurellales</taxon>
        <taxon>Pasteurellaceae</taxon>
        <taxon>Haemophilus</taxon>
    </lineage>
</organism>
<keyword id="KW-0028">Amino-acid biosynthesis</keyword>
<keyword id="KW-0963">Cytoplasm</keyword>
<keyword id="KW-0220">Diaminopimelate biosynthesis</keyword>
<keyword id="KW-0456">Lyase</keyword>
<keyword id="KW-0457">Lysine biosynthesis</keyword>
<keyword id="KW-0704">Schiff base</keyword>